<dbReference type="EMBL" id="AF486184">
    <property type="protein sequence ID" value="AAN09961.1"/>
    <property type="status" value="ALT_INIT"/>
    <property type="molecule type" value="Genomic_DNA"/>
</dbReference>
<dbReference type="EMBL" id="AJ620207">
    <property type="protein sequence ID" value="CAF05684.1"/>
    <property type="molecule type" value="Genomic_DNA"/>
</dbReference>
<dbReference type="EMBL" id="AJ620207">
    <property type="protein sequence ID" value="CAF05683.1"/>
    <property type="status" value="ALT_INIT"/>
    <property type="molecule type" value="Genomic_DNA"/>
</dbReference>
<dbReference type="EMBL" id="U21862">
    <property type="protein sequence ID" value="AAA92825.1"/>
    <property type="molecule type" value="Genomic_DNA"/>
</dbReference>
<dbReference type="EMBL" id="X59062">
    <property type="protein sequence ID" value="CAA41786.1"/>
    <property type="molecule type" value="Genomic_DNA"/>
</dbReference>
<dbReference type="PIR" id="S15467">
    <property type="entry name" value="S15467"/>
</dbReference>
<dbReference type="RefSeq" id="NP_694451.2">
    <property type="nucleotide sequence ID" value="NC_004197.1"/>
</dbReference>
<dbReference type="SMR" id="P50805"/>
<dbReference type="GeneID" id="955382"/>
<dbReference type="KEGG" id="vg:955382"/>
<dbReference type="Proteomes" id="UP000006369">
    <property type="component" value="Genome"/>
</dbReference>
<dbReference type="Proteomes" id="UP000185274">
    <property type="component" value="Segment"/>
</dbReference>
<dbReference type="GO" id="GO:0042025">
    <property type="term" value="C:host cell nucleus"/>
    <property type="evidence" value="ECO:0007669"/>
    <property type="project" value="UniProtKB-SubCell"/>
</dbReference>
<dbReference type="GO" id="GO:0039620">
    <property type="term" value="C:T=7 icosahedral viral capsid"/>
    <property type="evidence" value="ECO:0007669"/>
    <property type="project" value="UniProtKB-UniRule"/>
</dbReference>
<dbReference type="GO" id="GO:0005198">
    <property type="term" value="F:structural molecule activity"/>
    <property type="evidence" value="ECO:0007669"/>
    <property type="project" value="UniProtKB-UniRule"/>
</dbReference>
<dbReference type="GO" id="GO:0075509">
    <property type="term" value="P:endocytosis involved in viral entry into host cell"/>
    <property type="evidence" value="ECO:0007669"/>
    <property type="project" value="UniProtKB-KW"/>
</dbReference>
<dbReference type="GO" id="GO:0019062">
    <property type="term" value="P:virion attachment to host cell"/>
    <property type="evidence" value="ECO:0007669"/>
    <property type="project" value="UniProtKB-UniRule"/>
</dbReference>
<dbReference type="Gene3D" id="2.60.175.20">
    <property type="entry name" value="Major capsid L1 (late) superfamily, Papillomavirus"/>
    <property type="match status" value="2"/>
</dbReference>
<dbReference type="HAMAP" id="MF_04002">
    <property type="entry name" value="PPV_L1"/>
    <property type="match status" value="1"/>
</dbReference>
<dbReference type="InterPro" id="IPR002210">
    <property type="entry name" value="Capsid_L1_Papillomavir"/>
</dbReference>
<dbReference type="InterPro" id="IPR036973">
    <property type="entry name" value="Capsid_L1_sf_Papillomavir"/>
</dbReference>
<dbReference type="InterPro" id="IPR011222">
    <property type="entry name" value="dsDNA_vir_gr_I_capsid"/>
</dbReference>
<dbReference type="Pfam" id="PF00500">
    <property type="entry name" value="Late_protein_L1"/>
    <property type="match status" value="1"/>
</dbReference>
<dbReference type="PRINTS" id="PR00865">
    <property type="entry name" value="HPVCAPSIDL1"/>
</dbReference>
<dbReference type="SUPFAM" id="SSF88648">
    <property type="entry name" value="Group I dsDNA viruses"/>
    <property type="match status" value="1"/>
</dbReference>
<evidence type="ECO:0000255" key="1">
    <source>
        <dbReference type="HAMAP-Rule" id="MF_04002"/>
    </source>
</evidence>
<evidence type="ECO:0000256" key="2">
    <source>
        <dbReference type="SAM" id="MobiDB-lite"/>
    </source>
</evidence>
<evidence type="ECO:0000305" key="3"/>
<comment type="function">
    <text evidence="1">Forms an icosahedral capsid with a T=7 symmetry and a 50 nm diameter. The capsid is composed of 72 pentamers linked to each other by disulfide bonds and associated with L2 proteins. Binds to heparan sulfate proteoglycans on cell surface of basal layer keratinocytes to provide initial virion attachment. This binding mediates a conformational change in the virus capsid that facilitates efficient infection. The virion enters the host cell via endocytosis. During virus trafficking, L1 protein dissociates from the viral DNA and the genomic DNA is released to the host nucleus. The virion assembly takes place within the cell nucleus. Encapsulates the genomic DNA together with protein L2.</text>
</comment>
<comment type="subunit">
    <text evidence="1">Self-assembles into homopentamers. The capsid has an icosahedral symmetry and consists of 72 capsomers, with each capsomer being a pentamer of L1. Interacts with the minor capsid protein L2; this interaction is necessary for viral genome encapsidation. Interacts with protein E2; this interaction enhances E2-dependent replication and transcription activation.</text>
</comment>
<comment type="subcellular location">
    <subcellularLocation>
        <location evidence="1">Virion</location>
    </subcellularLocation>
    <subcellularLocation>
        <location evidence="1">Host nucleus</location>
    </subcellularLocation>
</comment>
<comment type="similarity">
    <text evidence="1">Belongs to the papillomaviridae L1 protein family.</text>
</comment>
<comment type="sequence caution" evidence="3">
    <conflict type="erroneous initiation">
        <sequence resource="EMBL-CDS" id="AAN09961"/>
    </conflict>
</comment>
<comment type="sequence caution" evidence="3">
    <conflict type="erroneous initiation">
        <sequence resource="EMBL-CDS" id="CAF05683"/>
    </conflict>
</comment>
<reference key="1">
    <citation type="journal article" date="2002" name="J. Virol.">
        <title>Lack of canonical E6 and E7 open reading frames in bird papillomaviruses: Fringilla coelebs papillomavirus and Psittacus erithacus timneh papillomavirus.</title>
        <authorList>
            <person name="Terai M."/>
            <person name="DeSalle R."/>
            <person name="Burk R.D."/>
        </authorList>
    </citation>
    <scope>NUCLEOTIDE SEQUENCE [GENOMIC DNA]</scope>
</reference>
<reference key="2">
    <citation type="submission" date="2004-01" db="EMBL/GenBank/DDBJ databases">
        <title>Sequencing of the complete genomes of BPV 3, BPV 5 and BPV 6.</title>
        <authorList>
            <person name="Delius H."/>
            <person name="de Villiers E.M."/>
        </authorList>
    </citation>
    <scope>NUCLEOTIDE SEQUENCE [GENOMIC DNA]</scope>
</reference>
<reference key="3">
    <citation type="journal article" date="1995" name="J. Virol.">
        <title>Analysis of genomic sequences of 95 papillomavirus types: uniting typing, phylogeny, and taxonomy.</title>
        <authorList>
            <person name="Chan S.-Y."/>
            <person name="Delius H."/>
            <person name="Halpern A.L."/>
            <person name="Bernard H.U."/>
        </authorList>
    </citation>
    <scope>NUCLEOTIDE SEQUENCE [GENOMIC DNA] OF 368-462</scope>
</reference>
<reference key="4">
    <citation type="journal article" date="1991" name="J. Gen. Virol.">
        <title>Positive and negative E2-independent regulatory elements in the long control region of bovine papillomavirus type 4.</title>
        <authorList>
            <person name="Jackson M.E."/>
            <person name="Campo M.S."/>
        </authorList>
    </citation>
    <scope>NUCLEOTIDE SEQUENCE [GENOMIC DNA] OF 422-510</scope>
</reference>
<gene>
    <name evidence="1" type="primary">L1</name>
</gene>
<proteinExistence type="inferred from homology"/>
<protein>
    <recommendedName>
        <fullName evidence="1">Major capsid protein L1</fullName>
    </recommendedName>
</protein>
<feature type="chain" id="PRO_0000133477" description="Major capsid protein L1">
    <location>
        <begin position="1"/>
        <end position="510"/>
    </location>
</feature>
<feature type="region of interest" description="Disordered" evidence="2">
    <location>
        <begin position="482"/>
        <end position="510"/>
    </location>
</feature>
<feature type="compositionally biased region" description="Basic residues" evidence="2">
    <location>
        <begin position="498"/>
        <end position="510"/>
    </location>
</feature>
<feature type="disulfide bond" description="Interchain (with C-432)" evidence="1">
    <location>
        <position position="174"/>
    </location>
</feature>
<feature type="disulfide bond" description="Interchain (with C-174)" evidence="1">
    <location>
        <position position="432"/>
    </location>
</feature>
<feature type="sequence conflict" description="In Ref. 3; AAA92825." evidence="3" ref="3">
    <original>G</original>
    <variation>C</variation>
    <location>
        <position position="398"/>
    </location>
</feature>
<accession>P50805</accession>
<accession>Q705F7</accession>
<accession>Q8BDD3</accession>
<name>VL1_BPV3</name>
<keyword id="KW-0167">Capsid protein</keyword>
<keyword id="KW-1015">Disulfide bond</keyword>
<keyword id="KW-1048">Host nucleus</keyword>
<keyword id="KW-0945">Host-virus interaction</keyword>
<keyword id="KW-0426">Late protein</keyword>
<keyword id="KW-1185">Reference proteome</keyword>
<keyword id="KW-1145">T=7 icosahedral capsid protein</keyword>
<keyword id="KW-1161">Viral attachment to host cell</keyword>
<keyword id="KW-1162">Viral penetration into host cytoplasm</keyword>
<keyword id="KW-0946">Virion</keyword>
<keyword id="KW-1164">Virus endocytosis by host</keyword>
<keyword id="KW-1160">Virus entry into host cell</keyword>
<organismHost>
    <name type="scientific">Bos taurus</name>
    <name type="common">Bovine</name>
    <dbReference type="NCBI Taxonomy" id="9913"/>
</organismHost>
<sequence length="510" mass="58033">MSFWLPSQGKLYLPPPTAVTQYLDTDDFVTRTDTFYHTNTERLLFVGHPYFDIKREDKVLVPKVSGSQFRVFRLKFPDPNKFSFPDPNVYNSDNQRLVWALRGIEICRGQPLGIGVTGHPSFNKFKDAENNNNKTPDQTTDDRVNMAVDPKQVQMFIVGCTPCDGEHWDVAQACDRLEPGACPPIELKNTIIEDGEMCDTGFGNMNFQKLQASKSGAPLDIVNQIVKYPDFLKMGSDPHGNSMFFYAKREQMYVRHLWSRGGTIGEEIPPNGEASPYYLPGAGRATLPTSVYFGSPSGSLVSSDQQIYNRPFWIQRAQGRNNGICWNNQLFVTAVDSTRGTNFTISVHRDKPSLEDQDTYTAAEFKHYLRHVEEWEVSLVLQLCIVDLTPEALAHINGMDPRIIESWNLGFIHAPNNIEDQYRYLQSIATRCPPKEDAAATEDPYAKYTFWDVDLTERFSMNLDQYSLGRKFLFQIGKKSRGIKRSAPKAVTFESSSRSKKAPKRRRKNV</sequence>
<organism>
    <name type="scientific">Bovine papillomavirus type 3</name>
    <dbReference type="NCBI Taxonomy" id="2758957"/>
    <lineage>
        <taxon>Viruses</taxon>
        <taxon>Monodnaviria</taxon>
        <taxon>Shotokuvirae</taxon>
        <taxon>Cossaviricota</taxon>
        <taxon>Papovaviricetes</taxon>
        <taxon>Zurhausenvirales</taxon>
        <taxon>Papillomaviridae</taxon>
        <taxon>Firstpapillomavirinae</taxon>
        <taxon>Xipapillomavirus</taxon>
        <taxon>Xipapillomavirus 1</taxon>
    </lineage>
</organism>